<accession>Q7YQL3</accession>
<name>PAK3_PONPY</name>
<proteinExistence type="evidence at transcript level"/>
<sequence>MSDGLDNEEKPPAPPLRMNSNNRDSSALNHSSKPLPMAPEEKNKKARLRSIFPGGGDKTNKKKEKERPEISLPSDFEHTIHVGFDAVTGEFTPDLYGSQMCPGKLPEGIPEQWARLLQTSNITKLEQKKNPQAVLDVLKFYDSKETVNNQKYMSFTSGDKSAHGYIAAHPSSTKTASEPPLAPPVSEEEDEEEEEEEDENEPPPVIAPRPEHTKSIYTRSVVESIASPAVPNKEVTPPSAENANSSTLYRNTDRQRKKSKMTDEEILEKLRSIVSVGDPKKKYTRFEKIGQGASGTVYTALDIATGQEVAIKQMNLQQQPKKELIINEILVMRENKNPNIVNYLDSYLVGDELWVVMEYLAGGSLTDVVTETCMDEGQIAAVCRECLQALDFLHSNQVIHRDIKSDNILLGMDGSVKLTDFGFCAQITPEQSKRSTMVGTPYWMAPEVVTRKAYGPKVDIWSLGIMAIEMVEGEPPYLNENPLRALYLIATNGTPELQNPERLSAVFRDFLNRCLEMDVDRRGSAKELLQHPFLKLAKPLSSLTPLIIAAKEAIKNSSR</sequence>
<organism>
    <name type="scientific">Pongo pygmaeus</name>
    <name type="common">Bornean orangutan</name>
    <dbReference type="NCBI Taxonomy" id="9600"/>
    <lineage>
        <taxon>Eukaryota</taxon>
        <taxon>Metazoa</taxon>
        <taxon>Chordata</taxon>
        <taxon>Craniata</taxon>
        <taxon>Vertebrata</taxon>
        <taxon>Euteleostomi</taxon>
        <taxon>Mammalia</taxon>
        <taxon>Eutheria</taxon>
        <taxon>Euarchontoglires</taxon>
        <taxon>Primates</taxon>
        <taxon>Haplorrhini</taxon>
        <taxon>Catarrhini</taxon>
        <taxon>Hominidae</taxon>
        <taxon>Pongo</taxon>
    </lineage>
</organism>
<protein>
    <recommendedName>
        <fullName>Serine/threonine-protein kinase PAK 3</fullName>
        <ecNumber>2.7.11.1</ecNumber>
    </recommendedName>
    <alternativeName>
        <fullName>Beta-PAK</fullName>
    </alternativeName>
    <alternativeName>
        <fullName>p21-activated kinase 3</fullName>
        <shortName>PAK-3</shortName>
    </alternativeName>
</protein>
<reference key="1">
    <citation type="journal article" date="2003" name="Mol. Biol. Evol.">
        <title>Gene diversity patterns at 10 X-chromosomal loci in humans and chimpanzees.</title>
        <authorList>
            <person name="Kitano T."/>
            <person name="Schwarz C."/>
            <person name="Nickel B."/>
            <person name="Paeaebo S."/>
        </authorList>
    </citation>
    <scope>NUCLEOTIDE SEQUENCE [MRNA]</scope>
</reference>
<evidence type="ECO:0000250" key="1"/>
<evidence type="ECO:0000250" key="2">
    <source>
        <dbReference type="UniProtKB" id="O75914"/>
    </source>
</evidence>
<evidence type="ECO:0000250" key="3">
    <source>
        <dbReference type="UniProtKB" id="Q61036"/>
    </source>
</evidence>
<evidence type="ECO:0000250" key="4">
    <source>
        <dbReference type="UniProtKB" id="Q62829"/>
    </source>
</evidence>
<evidence type="ECO:0000255" key="5">
    <source>
        <dbReference type="PROSITE-ProRule" id="PRU00057"/>
    </source>
</evidence>
<evidence type="ECO:0000255" key="6">
    <source>
        <dbReference type="PROSITE-ProRule" id="PRU00159"/>
    </source>
</evidence>
<evidence type="ECO:0000255" key="7">
    <source>
        <dbReference type="PROSITE-ProRule" id="PRU10027"/>
    </source>
</evidence>
<evidence type="ECO:0000256" key="8">
    <source>
        <dbReference type="SAM" id="MobiDB-lite"/>
    </source>
</evidence>
<evidence type="ECO:0000305" key="9"/>
<comment type="function">
    <text evidence="1 3">Serine/threonine protein kinase that plays a role in a variety of different signaling pathways including cytoskeleton regulation, cell migration, or cell cycle regulation. Plays a role in dendrite spine morphogenesis as well as synapse formation and plasticity. Acts as a downstream effector of the small GTPases CDC42 and RAC1. Activation by the binding of active CDC42 and RAC1 results in a conformational change and a subsequent autophosphorylation on several serine and/or threonine residues. Phosphorylates MAPK4 and MAPK6 and activates the downstream target MAPKAPK5, a regulator of F-actin polymerization and cell migration. Additionally, phosphorylates TNNI3/troponin I to modulate calcium sensitivity and relaxation kinetics of thin myofilaments. May also be involved in early neuronal development (By similarity). In hippocampal neurons, necessary for the formation of dendritic spines and excitatory synapses; this function is dependent on kinase activity and may be exerted by the regulation of actomyosin contractility through the phosphorylation of myosin II regulatory light chain (MLC) (By similarity).</text>
</comment>
<comment type="catalytic activity">
    <reaction>
        <text>L-seryl-[protein] + ATP = O-phospho-L-seryl-[protein] + ADP + H(+)</text>
        <dbReference type="Rhea" id="RHEA:17989"/>
        <dbReference type="Rhea" id="RHEA-COMP:9863"/>
        <dbReference type="Rhea" id="RHEA-COMP:11604"/>
        <dbReference type="ChEBI" id="CHEBI:15378"/>
        <dbReference type="ChEBI" id="CHEBI:29999"/>
        <dbReference type="ChEBI" id="CHEBI:30616"/>
        <dbReference type="ChEBI" id="CHEBI:83421"/>
        <dbReference type="ChEBI" id="CHEBI:456216"/>
        <dbReference type="EC" id="2.7.11.1"/>
    </reaction>
</comment>
<comment type="catalytic activity">
    <reaction>
        <text>L-threonyl-[protein] + ATP = O-phospho-L-threonyl-[protein] + ADP + H(+)</text>
        <dbReference type="Rhea" id="RHEA:46608"/>
        <dbReference type="Rhea" id="RHEA-COMP:11060"/>
        <dbReference type="Rhea" id="RHEA-COMP:11605"/>
        <dbReference type="ChEBI" id="CHEBI:15378"/>
        <dbReference type="ChEBI" id="CHEBI:30013"/>
        <dbReference type="ChEBI" id="CHEBI:30616"/>
        <dbReference type="ChEBI" id="CHEBI:61977"/>
        <dbReference type="ChEBI" id="CHEBI:456216"/>
        <dbReference type="EC" id="2.7.11.1"/>
    </reaction>
</comment>
<comment type="cofactor">
    <cofactor evidence="1">
        <name>Mg(2+)</name>
        <dbReference type="ChEBI" id="CHEBI:18420"/>
    </cofactor>
</comment>
<comment type="activity regulation">
    <text evidence="1">Activated by binding small G proteins. Binding of GTP-bound CDC42 or RAC1 to the autoregulatory region releases monomers from the autoinhibited dimer, enables phosphorylation of Thr-436 and allows the kinase domain to adopt an active structure (By similarity).</text>
</comment>
<comment type="subunit">
    <text evidence="1 2">Interacts tightly with GTP-bound but not GDP-bound CDC42/p21 and RAC1. Shows highly specific binding to the SH3 domains of phospholipase C-gamma and of adapter protein NCK. Interacts with the C-terminal of APP. Interacts with ARHGEF6 and ARHGEF7 (By similarity). Interacts with GIT1 and GIT2 (By similarity).</text>
</comment>
<comment type="subcellular location">
    <subcellularLocation>
        <location evidence="1">Cytoplasm</location>
    </subcellularLocation>
</comment>
<comment type="PTM">
    <text evidence="1">Autophosphorylated when activated by CDC42/p21.</text>
</comment>
<comment type="PTM">
    <text evidence="1">Neddylated.</text>
</comment>
<comment type="similarity">
    <text evidence="9">Belongs to the protein kinase superfamily. STE Ser/Thr protein kinase family. STE20 subfamily.</text>
</comment>
<feature type="chain" id="PRO_0000086472" description="Serine/threonine-protein kinase PAK 3">
    <location>
        <begin position="1"/>
        <end position="559"/>
    </location>
</feature>
<feature type="domain" description="CRIB" evidence="5">
    <location>
        <begin position="70"/>
        <end position="83"/>
    </location>
</feature>
<feature type="domain" description="Protein kinase" evidence="6">
    <location>
        <begin position="283"/>
        <end position="534"/>
    </location>
</feature>
<feature type="region of interest" description="Disordered" evidence="8">
    <location>
        <begin position="1"/>
        <end position="72"/>
    </location>
</feature>
<feature type="region of interest" description="Autoregulatory region" evidence="1">
    <location>
        <begin position="65"/>
        <end position="150"/>
    </location>
</feature>
<feature type="region of interest" description="GTPase-binding" evidence="1">
    <location>
        <begin position="65"/>
        <end position="123"/>
    </location>
</feature>
<feature type="region of interest" description="Linker">
    <location>
        <begin position="84"/>
        <end position="282"/>
    </location>
</feature>
<feature type="region of interest" description="Disordered" evidence="8">
    <location>
        <begin position="164"/>
        <end position="212"/>
    </location>
</feature>
<feature type="region of interest" description="Disordered" evidence="8">
    <location>
        <begin position="228"/>
        <end position="262"/>
    </location>
</feature>
<feature type="compositionally biased region" description="Polar residues" evidence="8">
    <location>
        <begin position="18"/>
        <end position="32"/>
    </location>
</feature>
<feature type="compositionally biased region" description="Basic and acidic residues" evidence="8">
    <location>
        <begin position="63"/>
        <end position="72"/>
    </location>
</feature>
<feature type="compositionally biased region" description="Acidic residues" evidence="8">
    <location>
        <begin position="186"/>
        <end position="201"/>
    </location>
</feature>
<feature type="compositionally biased region" description="Polar residues" evidence="8">
    <location>
        <begin position="239"/>
        <end position="250"/>
    </location>
</feature>
<feature type="active site" description="Proton acceptor" evidence="6 7">
    <location>
        <position position="402"/>
    </location>
</feature>
<feature type="binding site" evidence="6">
    <location>
        <begin position="289"/>
        <end position="297"/>
    </location>
    <ligand>
        <name>ATP</name>
        <dbReference type="ChEBI" id="CHEBI:30616"/>
    </ligand>
</feature>
<feature type="binding site" evidence="6">
    <location>
        <position position="312"/>
    </location>
    <ligand>
        <name>ATP</name>
        <dbReference type="ChEBI" id="CHEBI:30616"/>
    </ligand>
</feature>
<feature type="modified residue" description="Phosphoserine" evidence="4">
    <location>
        <position position="2"/>
    </location>
</feature>
<feature type="modified residue" description="Phosphoserine; by autocatalysis" evidence="4">
    <location>
        <position position="50"/>
    </location>
</feature>
<feature type="modified residue" description="Phosphoserine; by autocatalysis" evidence="4">
    <location>
        <position position="154"/>
    </location>
</feature>
<feature type="modified residue" description="Phosphoserine" evidence="3">
    <location>
        <position position="186"/>
    </location>
</feature>
<feature type="modified residue" description="Phosphothreonine; by autocatalysis" evidence="4">
    <location>
        <position position="436"/>
    </location>
</feature>
<gene>
    <name type="primary">PAK3</name>
</gene>
<dbReference type="EC" id="2.7.11.1"/>
<dbReference type="EMBL" id="AB102661">
    <property type="protein sequence ID" value="BAC81130.1"/>
    <property type="molecule type" value="mRNA"/>
</dbReference>
<dbReference type="RefSeq" id="XP_054329161.1">
    <property type="nucleotide sequence ID" value="XM_054473186.2"/>
</dbReference>
<dbReference type="RefSeq" id="XP_054329162.1">
    <property type="nucleotide sequence ID" value="XM_054473187.2"/>
</dbReference>
<dbReference type="RefSeq" id="XP_054329163.1">
    <property type="nucleotide sequence ID" value="XM_054473188.2"/>
</dbReference>
<dbReference type="RefSeq" id="XP_054329165.1">
    <property type="nucleotide sequence ID" value="XM_054473190.2"/>
</dbReference>
<dbReference type="SMR" id="Q7YQL3"/>
<dbReference type="GeneID" id="129025378"/>
<dbReference type="OrthoDB" id="1022360at2759"/>
<dbReference type="GO" id="GO:0005737">
    <property type="term" value="C:cytoplasm"/>
    <property type="evidence" value="ECO:0007669"/>
    <property type="project" value="UniProtKB-SubCell"/>
</dbReference>
<dbReference type="GO" id="GO:0005524">
    <property type="term" value="F:ATP binding"/>
    <property type="evidence" value="ECO:0007669"/>
    <property type="project" value="UniProtKB-KW"/>
</dbReference>
<dbReference type="GO" id="GO:0004708">
    <property type="term" value="F:MAP kinase kinase activity"/>
    <property type="evidence" value="ECO:0000250"/>
    <property type="project" value="UniProtKB"/>
</dbReference>
<dbReference type="GO" id="GO:0046872">
    <property type="term" value="F:metal ion binding"/>
    <property type="evidence" value="ECO:0007669"/>
    <property type="project" value="UniProtKB-KW"/>
</dbReference>
<dbReference type="GO" id="GO:0106310">
    <property type="term" value="F:protein serine kinase activity"/>
    <property type="evidence" value="ECO:0007669"/>
    <property type="project" value="RHEA"/>
</dbReference>
<dbReference type="GO" id="GO:0004674">
    <property type="term" value="F:protein serine/threonine kinase activity"/>
    <property type="evidence" value="ECO:0007669"/>
    <property type="project" value="UniProtKB-KW"/>
</dbReference>
<dbReference type="GO" id="GO:0017124">
    <property type="term" value="F:SH3 domain binding"/>
    <property type="evidence" value="ECO:0007669"/>
    <property type="project" value="UniProtKB-KW"/>
</dbReference>
<dbReference type="GO" id="GO:0007409">
    <property type="term" value="P:axonogenesis"/>
    <property type="evidence" value="ECO:0000250"/>
    <property type="project" value="UniProtKB"/>
</dbReference>
<dbReference type="GO" id="GO:0016358">
    <property type="term" value="P:dendrite development"/>
    <property type="evidence" value="ECO:0000250"/>
    <property type="project" value="UniProtKB"/>
</dbReference>
<dbReference type="GO" id="GO:0060997">
    <property type="term" value="P:dendritic spine morphogenesis"/>
    <property type="evidence" value="ECO:0000250"/>
    <property type="project" value="UniProtKB"/>
</dbReference>
<dbReference type="GO" id="GO:0030833">
    <property type="term" value="P:regulation of actin filament polymerization"/>
    <property type="evidence" value="ECO:0000250"/>
    <property type="project" value="UniProtKB"/>
</dbReference>
<dbReference type="CDD" id="cd01093">
    <property type="entry name" value="CRIB_PAK_like"/>
    <property type="match status" value="1"/>
</dbReference>
<dbReference type="CDD" id="cd06656">
    <property type="entry name" value="STKc_PAK3"/>
    <property type="match status" value="1"/>
</dbReference>
<dbReference type="FunFam" id="1.10.510.10:FF:000011">
    <property type="entry name" value="Non-specific serine/threonine protein kinase"/>
    <property type="match status" value="1"/>
</dbReference>
<dbReference type="FunFam" id="3.30.200.20:FF:000069">
    <property type="entry name" value="Non-specific serine/threonine protein kinase"/>
    <property type="match status" value="1"/>
</dbReference>
<dbReference type="FunFam" id="3.90.810.10:FF:000001">
    <property type="entry name" value="Non-specific serine/threonine protein kinase"/>
    <property type="match status" value="1"/>
</dbReference>
<dbReference type="Gene3D" id="3.90.810.10">
    <property type="entry name" value="CRIB domain"/>
    <property type="match status" value="1"/>
</dbReference>
<dbReference type="Gene3D" id="3.30.200.20">
    <property type="entry name" value="Phosphorylase Kinase, domain 1"/>
    <property type="match status" value="1"/>
</dbReference>
<dbReference type="Gene3D" id="1.10.510.10">
    <property type="entry name" value="Transferase(Phosphotransferase) domain 1"/>
    <property type="match status" value="1"/>
</dbReference>
<dbReference type="InterPro" id="IPR000095">
    <property type="entry name" value="CRIB_dom"/>
</dbReference>
<dbReference type="InterPro" id="IPR036936">
    <property type="entry name" value="CRIB_dom_sf"/>
</dbReference>
<dbReference type="InterPro" id="IPR011009">
    <property type="entry name" value="Kinase-like_dom_sf"/>
</dbReference>
<dbReference type="InterPro" id="IPR051931">
    <property type="entry name" value="PAK3-like"/>
</dbReference>
<dbReference type="InterPro" id="IPR033923">
    <property type="entry name" value="PAK_BD"/>
</dbReference>
<dbReference type="InterPro" id="IPR000719">
    <property type="entry name" value="Prot_kinase_dom"/>
</dbReference>
<dbReference type="InterPro" id="IPR017441">
    <property type="entry name" value="Protein_kinase_ATP_BS"/>
</dbReference>
<dbReference type="InterPro" id="IPR008271">
    <property type="entry name" value="Ser/Thr_kinase_AS"/>
</dbReference>
<dbReference type="InterPro" id="IPR035063">
    <property type="entry name" value="STK_PAK3"/>
</dbReference>
<dbReference type="PANTHER" id="PTHR45832">
    <property type="entry name" value="SERINE/THREONINE-PROTEIN KINASE SAMKA-RELATED-RELATED"/>
    <property type="match status" value="1"/>
</dbReference>
<dbReference type="PANTHER" id="PTHR45832:SF11">
    <property type="entry name" value="SERINE_THREONINE-PROTEIN KINASE PAK 3"/>
    <property type="match status" value="1"/>
</dbReference>
<dbReference type="Pfam" id="PF00786">
    <property type="entry name" value="PBD"/>
    <property type="match status" value="1"/>
</dbReference>
<dbReference type="Pfam" id="PF00069">
    <property type="entry name" value="Pkinase"/>
    <property type="match status" value="1"/>
</dbReference>
<dbReference type="SMART" id="SM00285">
    <property type="entry name" value="PBD"/>
    <property type="match status" value="1"/>
</dbReference>
<dbReference type="SMART" id="SM00220">
    <property type="entry name" value="S_TKc"/>
    <property type="match status" value="1"/>
</dbReference>
<dbReference type="SUPFAM" id="SSF56112">
    <property type="entry name" value="Protein kinase-like (PK-like)"/>
    <property type="match status" value="1"/>
</dbReference>
<dbReference type="PROSITE" id="PS50108">
    <property type="entry name" value="CRIB"/>
    <property type="match status" value="1"/>
</dbReference>
<dbReference type="PROSITE" id="PS00107">
    <property type="entry name" value="PROTEIN_KINASE_ATP"/>
    <property type="match status" value="1"/>
</dbReference>
<dbReference type="PROSITE" id="PS50011">
    <property type="entry name" value="PROTEIN_KINASE_DOM"/>
    <property type="match status" value="1"/>
</dbReference>
<dbReference type="PROSITE" id="PS00108">
    <property type="entry name" value="PROTEIN_KINASE_ST"/>
    <property type="match status" value="1"/>
</dbReference>
<keyword id="KW-0021">Allosteric enzyme</keyword>
<keyword id="KW-0067">ATP-binding</keyword>
<keyword id="KW-0963">Cytoplasm</keyword>
<keyword id="KW-0217">Developmental protein</keyword>
<keyword id="KW-0418">Kinase</keyword>
<keyword id="KW-0460">Magnesium</keyword>
<keyword id="KW-0479">Metal-binding</keyword>
<keyword id="KW-0547">Nucleotide-binding</keyword>
<keyword id="KW-0597">Phosphoprotein</keyword>
<keyword id="KW-0723">Serine/threonine-protein kinase</keyword>
<keyword id="KW-0729">SH3-binding</keyword>
<keyword id="KW-0808">Transferase</keyword>
<keyword id="KW-0832">Ubl conjugation</keyword>